<organism>
    <name type="scientific">Pseudomonas fluorescens (strain Pf0-1)</name>
    <dbReference type="NCBI Taxonomy" id="205922"/>
    <lineage>
        <taxon>Bacteria</taxon>
        <taxon>Pseudomonadati</taxon>
        <taxon>Pseudomonadota</taxon>
        <taxon>Gammaproteobacteria</taxon>
        <taxon>Pseudomonadales</taxon>
        <taxon>Pseudomonadaceae</taxon>
        <taxon>Pseudomonas</taxon>
    </lineage>
</organism>
<proteinExistence type="inferred from homology"/>
<name>Y5469_PSEPF</name>
<accession>Q3K4U8</accession>
<comment type="similarity">
    <text evidence="1">Belongs to the UPF0178 family.</text>
</comment>
<comment type="sequence caution" evidence="2">
    <conflict type="erroneous initiation">
        <sequence resource="EMBL-CDS" id="ABA77206"/>
    </conflict>
</comment>
<dbReference type="EMBL" id="CP000094">
    <property type="protein sequence ID" value="ABA77206.1"/>
    <property type="status" value="ALT_INIT"/>
    <property type="molecule type" value="Genomic_DNA"/>
</dbReference>
<dbReference type="RefSeq" id="WP_041475621.1">
    <property type="nucleotide sequence ID" value="NC_007492.2"/>
</dbReference>
<dbReference type="KEGG" id="pfo:Pfl01_5469"/>
<dbReference type="eggNOG" id="COG1671">
    <property type="taxonomic scope" value="Bacteria"/>
</dbReference>
<dbReference type="HOGENOM" id="CLU_106619_2_1_6"/>
<dbReference type="Proteomes" id="UP000002704">
    <property type="component" value="Chromosome"/>
</dbReference>
<dbReference type="CDD" id="cd18720">
    <property type="entry name" value="PIN_YqxD-like"/>
    <property type="match status" value="1"/>
</dbReference>
<dbReference type="HAMAP" id="MF_00489">
    <property type="entry name" value="UPF0178"/>
    <property type="match status" value="1"/>
</dbReference>
<dbReference type="InterPro" id="IPR003791">
    <property type="entry name" value="UPF0178"/>
</dbReference>
<dbReference type="NCBIfam" id="NF001095">
    <property type="entry name" value="PRK00124.1"/>
    <property type="match status" value="1"/>
</dbReference>
<dbReference type="PANTHER" id="PTHR35146">
    <property type="entry name" value="UPF0178 PROTEIN YAII"/>
    <property type="match status" value="1"/>
</dbReference>
<dbReference type="PANTHER" id="PTHR35146:SF1">
    <property type="entry name" value="UPF0178 PROTEIN YAII"/>
    <property type="match status" value="1"/>
</dbReference>
<dbReference type="Pfam" id="PF02639">
    <property type="entry name" value="DUF188"/>
    <property type="match status" value="1"/>
</dbReference>
<gene>
    <name type="ordered locus">Pfl01_5469</name>
</gene>
<protein>
    <recommendedName>
        <fullName evidence="1">UPF0178 protein Pfl01_5469</fullName>
    </recommendedName>
</protein>
<evidence type="ECO:0000255" key="1">
    <source>
        <dbReference type="HAMAP-Rule" id="MF_00489"/>
    </source>
</evidence>
<evidence type="ECO:0000305" key="2"/>
<feature type="chain" id="PRO_0000241820" description="UPF0178 protein Pfl01_5469">
    <location>
        <begin position="1"/>
        <end position="151"/>
    </location>
</feature>
<sequence>MRVWIDADACPKMAKELVVKFALKRRFEVVLVAGQPQSKPALALVKLIVVPSGPDAADDYLVEHAVPGELVICSDIPLADRLVKKGVAALDPRGKEFDAQNMGERLATRNLFTDLREQGQVSGGPAPFGDREKQAFANALDRILTRLARQS</sequence>
<reference key="1">
    <citation type="journal article" date="2009" name="Genome Biol.">
        <title>Genomic and genetic analyses of diversity and plant interactions of Pseudomonas fluorescens.</title>
        <authorList>
            <person name="Silby M.W."/>
            <person name="Cerdeno-Tarraga A.M."/>
            <person name="Vernikos G.S."/>
            <person name="Giddens S.R."/>
            <person name="Jackson R.W."/>
            <person name="Preston G.M."/>
            <person name="Zhang X.-X."/>
            <person name="Moon C.D."/>
            <person name="Gehrig S.M."/>
            <person name="Godfrey S.A.C."/>
            <person name="Knight C.G."/>
            <person name="Malone J.G."/>
            <person name="Robinson Z."/>
            <person name="Spiers A.J."/>
            <person name="Harris S."/>
            <person name="Challis G.L."/>
            <person name="Yaxley A.M."/>
            <person name="Harris D."/>
            <person name="Seeger K."/>
            <person name="Murphy L."/>
            <person name="Rutter S."/>
            <person name="Squares R."/>
            <person name="Quail M.A."/>
            <person name="Saunders E."/>
            <person name="Mavromatis K."/>
            <person name="Brettin T.S."/>
            <person name="Bentley S.D."/>
            <person name="Hothersall J."/>
            <person name="Stephens E."/>
            <person name="Thomas C.M."/>
            <person name="Parkhill J."/>
            <person name="Levy S.B."/>
            <person name="Rainey P.B."/>
            <person name="Thomson N.R."/>
        </authorList>
    </citation>
    <scope>NUCLEOTIDE SEQUENCE [LARGE SCALE GENOMIC DNA]</scope>
    <source>
        <strain>Pf0-1</strain>
    </source>
</reference>